<reference key="1">
    <citation type="journal article" date="2005" name="Mol. Biol. Evol.">
        <title>The chloroplast genome sequence of the green alga Pseudendoclonium akinetum (Ulvophyceae) reveals unusual structural features and new insights into the branching order of chlorophyte lineages.</title>
        <authorList>
            <person name="Pombert J.-F."/>
            <person name="Otis C."/>
            <person name="Lemieux C."/>
            <person name="Turmel M."/>
        </authorList>
    </citation>
    <scope>NUCLEOTIDE SEQUENCE [LARGE SCALE GENOMIC DNA]</scope>
    <source>
        <strain>UTEX 1912</strain>
    </source>
</reference>
<feature type="signal peptide" evidence="2">
    <location>
        <begin position="1"/>
        <end position="44"/>
    </location>
</feature>
<feature type="chain" id="PRO_0000275445" description="Cytochrome f">
    <location>
        <begin position="45"/>
        <end position="329"/>
    </location>
</feature>
<feature type="transmembrane region" description="Helical" evidence="2">
    <location>
        <begin position="295"/>
        <end position="315"/>
    </location>
</feature>
<feature type="binding site" description="axial binding residue" evidence="2">
    <location>
        <position position="45"/>
    </location>
    <ligand>
        <name>heme</name>
        <dbReference type="ChEBI" id="CHEBI:30413"/>
    </ligand>
    <ligandPart>
        <name>Fe</name>
        <dbReference type="ChEBI" id="CHEBI:18248"/>
    </ligandPart>
</feature>
<feature type="binding site" description="covalent" evidence="2">
    <location>
        <position position="65"/>
    </location>
    <ligand>
        <name>heme</name>
        <dbReference type="ChEBI" id="CHEBI:30413"/>
    </ligand>
</feature>
<feature type="binding site" description="covalent" evidence="2">
    <location>
        <position position="68"/>
    </location>
    <ligand>
        <name>heme</name>
        <dbReference type="ChEBI" id="CHEBI:30413"/>
    </ligand>
</feature>
<feature type="binding site" description="axial binding residue" evidence="2">
    <location>
        <position position="69"/>
    </location>
    <ligand>
        <name>heme</name>
        <dbReference type="ChEBI" id="CHEBI:30413"/>
    </ligand>
    <ligandPart>
        <name>Fe</name>
        <dbReference type="ChEBI" id="CHEBI:18248"/>
    </ligandPart>
</feature>
<accession>Q3ZJ66</accession>
<keyword id="KW-0150">Chloroplast</keyword>
<keyword id="KW-0249">Electron transport</keyword>
<keyword id="KW-0349">Heme</keyword>
<keyword id="KW-0408">Iron</keyword>
<keyword id="KW-0472">Membrane</keyword>
<keyword id="KW-0479">Metal-binding</keyword>
<keyword id="KW-0602">Photosynthesis</keyword>
<keyword id="KW-0934">Plastid</keyword>
<keyword id="KW-0732">Signal</keyword>
<keyword id="KW-0793">Thylakoid</keyword>
<keyword id="KW-0812">Transmembrane</keyword>
<keyword id="KW-1133">Transmembrane helix</keyword>
<keyword id="KW-0813">Transport</keyword>
<organism>
    <name type="scientific">Tupiella akineta</name>
    <name type="common">Green alga</name>
    <name type="synonym">Pseudendoclonium akinetum</name>
    <dbReference type="NCBI Taxonomy" id="160070"/>
    <lineage>
        <taxon>Eukaryota</taxon>
        <taxon>Viridiplantae</taxon>
        <taxon>Chlorophyta</taxon>
        <taxon>Ulvophyceae</taxon>
        <taxon>OUU clade</taxon>
        <taxon>Ulotrichales</taxon>
        <taxon>Tupiellaceae</taxon>
        <taxon>Tupiella</taxon>
    </lineage>
</organism>
<evidence type="ECO:0000250" key="1"/>
<evidence type="ECO:0000255" key="2">
    <source>
        <dbReference type="HAMAP-Rule" id="MF_00610"/>
    </source>
</evidence>
<name>CYF_TUPAK</name>
<proteinExistence type="inferred from homology"/>
<gene>
    <name evidence="2" type="primary">petA</name>
</gene>
<protein>
    <recommendedName>
        <fullName evidence="2">Cytochrome f</fullName>
    </recommendedName>
</protein>
<sequence>MKRNIIFLVIHQFENLTMKKKQNIFFIFLLTVFFNFTVNSNVSAYPVFAQQGYKNPREANGRIVCANCHLAQKPVELEVPQAVLPDTVFEAMVKIPYDQQIKQVQANGKKGDLNVGMVLILPEGFELAPSDRLPEEMKKKVGNLYYQPYSSEQKNILVIGPIPGKLYNEMVVPLISPNPATNKNVNYLKYPIYLGGNRGRGQLYPDGSKSNNNLYNASATGKITEITPTGKKGGFDITIQTLNGETVIDKVPAGPELIVTKDQTIQVDQPLTNNPNVGGFGQAEAEIVLQNPARVQGLIIFLITIFITQLFLVLKKKQVEKVQLAEMNF</sequence>
<comment type="function">
    <text evidence="2">Component of the cytochrome b6-f complex, which mediates electron transfer between photosystem II (PSII) and photosystem I (PSI), cyclic electron flow around PSI, and state transitions.</text>
</comment>
<comment type="cofactor">
    <cofactor evidence="2">
        <name>heme</name>
        <dbReference type="ChEBI" id="CHEBI:30413"/>
    </cofactor>
    <text evidence="2">Binds 1 heme group covalently.</text>
</comment>
<comment type="subunit">
    <text evidence="1">The 4 large subunits of the cytochrome b6-f complex are cytochrome b6, subunit IV (17 kDa polypeptide, petD), cytochrome f and the Rieske protein, while the 4 small subunits are PetG, PetL, PetM and PetN. The complex functions as a dimer (By similarity).</text>
</comment>
<comment type="subcellular location">
    <subcellularLocation>
        <location evidence="2">Plastid</location>
        <location evidence="2">Chloroplast thylakoid membrane</location>
        <topology evidence="2">Single-pass membrane protein</topology>
    </subcellularLocation>
</comment>
<comment type="similarity">
    <text evidence="2">Belongs to the cytochrome f family.</text>
</comment>
<dbReference type="EMBL" id="AY835431">
    <property type="protein sequence ID" value="AAV80625.1"/>
    <property type="molecule type" value="Genomic_DNA"/>
</dbReference>
<dbReference type="RefSeq" id="YP_636201.1">
    <property type="nucleotide sequence ID" value="NC_008114.1"/>
</dbReference>
<dbReference type="SMR" id="Q3ZJ66"/>
<dbReference type="GeneID" id="4108805"/>
<dbReference type="GO" id="GO:0009535">
    <property type="term" value="C:chloroplast thylakoid membrane"/>
    <property type="evidence" value="ECO:0007669"/>
    <property type="project" value="UniProtKB-SubCell"/>
</dbReference>
<dbReference type="GO" id="GO:0009055">
    <property type="term" value="F:electron transfer activity"/>
    <property type="evidence" value="ECO:0007669"/>
    <property type="project" value="UniProtKB-UniRule"/>
</dbReference>
<dbReference type="GO" id="GO:0020037">
    <property type="term" value="F:heme binding"/>
    <property type="evidence" value="ECO:0007669"/>
    <property type="project" value="InterPro"/>
</dbReference>
<dbReference type="GO" id="GO:0005506">
    <property type="term" value="F:iron ion binding"/>
    <property type="evidence" value="ECO:0007669"/>
    <property type="project" value="InterPro"/>
</dbReference>
<dbReference type="GO" id="GO:0015979">
    <property type="term" value="P:photosynthesis"/>
    <property type="evidence" value="ECO:0007669"/>
    <property type="project" value="UniProtKB-UniRule"/>
</dbReference>
<dbReference type="FunFam" id="2.60.40.830:FF:000001">
    <property type="entry name" value="Cytochrome f"/>
    <property type="match status" value="1"/>
</dbReference>
<dbReference type="Gene3D" id="2.40.50.100">
    <property type="match status" value="1"/>
</dbReference>
<dbReference type="Gene3D" id="2.60.40.830">
    <property type="entry name" value="Cytochrome f large domain"/>
    <property type="match status" value="1"/>
</dbReference>
<dbReference type="Gene3D" id="1.20.5.700">
    <property type="entry name" value="Single helix bin"/>
    <property type="match status" value="1"/>
</dbReference>
<dbReference type="HAMAP" id="MF_00610">
    <property type="entry name" value="Cytb6_f_cytF"/>
    <property type="match status" value="1"/>
</dbReference>
<dbReference type="InterPro" id="IPR024058">
    <property type="entry name" value="Cyt-f_TM"/>
</dbReference>
<dbReference type="InterPro" id="IPR002325">
    <property type="entry name" value="Cyt_f"/>
</dbReference>
<dbReference type="InterPro" id="IPR024094">
    <property type="entry name" value="Cyt_f_lg_dom"/>
</dbReference>
<dbReference type="InterPro" id="IPR036826">
    <property type="entry name" value="Cyt_f_lg_dom_sf"/>
</dbReference>
<dbReference type="InterPro" id="IPR011054">
    <property type="entry name" value="Rudment_hybrid_motif"/>
</dbReference>
<dbReference type="PANTHER" id="PTHR33288">
    <property type="match status" value="1"/>
</dbReference>
<dbReference type="PANTHER" id="PTHR33288:SF10">
    <property type="entry name" value="CYTOCHROME F"/>
    <property type="match status" value="1"/>
</dbReference>
<dbReference type="Pfam" id="PF01333">
    <property type="entry name" value="Apocytochr_F_C"/>
    <property type="match status" value="1"/>
</dbReference>
<dbReference type="Pfam" id="PF16639">
    <property type="entry name" value="Apocytochr_F_N"/>
    <property type="match status" value="1"/>
</dbReference>
<dbReference type="PRINTS" id="PR00610">
    <property type="entry name" value="CYTOCHROMEF"/>
</dbReference>
<dbReference type="SUPFAM" id="SSF103431">
    <property type="entry name" value="Cytochrome f subunit of the cytochrome b6f complex, transmembrane anchor"/>
    <property type="match status" value="1"/>
</dbReference>
<dbReference type="SUPFAM" id="SSF49441">
    <property type="entry name" value="Cytochrome f, large domain"/>
    <property type="match status" value="1"/>
</dbReference>
<dbReference type="SUPFAM" id="SSF51246">
    <property type="entry name" value="Rudiment single hybrid motif"/>
    <property type="match status" value="1"/>
</dbReference>
<dbReference type="PROSITE" id="PS51010">
    <property type="entry name" value="CYTF"/>
    <property type="match status" value="1"/>
</dbReference>
<geneLocation type="chloroplast"/>